<organism>
    <name type="scientific">Dictyostelium discoideum</name>
    <name type="common">Social amoeba</name>
    <dbReference type="NCBI Taxonomy" id="44689"/>
    <lineage>
        <taxon>Eukaryota</taxon>
        <taxon>Amoebozoa</taxon>
        <taxon>Evosea</taxon>
        <taxon>Eumycetozoa</taxon>
        <taxon>Dictyostelia</taxon>
        <taxon>Dictyosteliales</taxon>
        <taxon>Dictyosteliaceae</taxon>
        <taxon>Dictyostelium</taxon>
    </lineage>
</organism>
<gene>
    <name type="primary">dagA</name>
    <name type="ORF">DDB_G0285161</name>
</gene>
<name>CRAC_DICDI</name>
<proteinExistence type="evidence at protein level"/>
<evidence type="ECO:0000255" key="1">
    <source>
        <dbReference type="PROSITE-ProRule" id="PRU00145"/>
    </source>
</evidence>
<evidence type="ECO:0000256" key="2">
    <source>
        <dbReference type="SAM" id="MobiDB-lite"/>
    </source>
</evidence>
<evidence type="ECO:0000269" key="3">
    <source>
    </source>
</evidence>
<evidence type="ECO:0000269" key="4">
    <source>
    </source>
</evidence>
<evidence type="ECO:0000305" key="5"/>
<feature type="initiator methionine" description="Removed" evidence="3">
    <location>
        <position position="1"/>
    </location>
</feature>
<feature type="chain" id="PRO_0000079325" description="Protein CRAC">
    <location>
        <begin position="2"/>
        <end position="698"/>
    </location>
</feature>
<feature type="domain" description="PH" evidence="1">
    <location>
        <begin position="22"/>
        <end position="122"/>
    </location>
</feature>
<feature type="region of interest" description="Disordered" evidence="2">
    <location>
        <begin position="594"/>
        <end position="630"/>
    </location>
</feature>
<feature type="compositionally biased region" description="Low complexity" evidence="2">
    <location>
        <begin position="601"/>
        <end position="626"/>
    </location>
</feature>
<feature type="sequence conflict" description="In Ref. 1; AAA61782." evidence="5" ref="1">
    <original>R</original>
    <variation>G</variation>
    <location>
        <position position="653"/>
    </location>
</feature>
<protein>
    <recommendedName>
        <fullName>Protein CRAC</fullName>
    </recommendedName>
</protein>
<keyword id="KW-0963">Cytoplasm</keyword>
<keyword id="KW-0217">Developmental protein</keyword>
<keyword id="KW-0903">Direct protein sequencing</keyword>
<keyword id="KW-1185">Reference proteome</keyword>
<accession>P35401</accession>
<accession>Q54NJ7</accession>
<sequence>MGKTERKKELLELFEYEKIKGDVSYSSIMKKAGGNGKGFLDRYFALHRNYILYYKLGKSSLKPDDKQEPQGYINLMDCNPDDTKEIAPLMFQISHKHRTYIVKAKDESSMKQFLTLLIARIRSLEKIDIDKLGCTVVVLTKVKKFREVLTNPLILPDRVSPEMAEEWVKQMKNYNASFNLADPFIKQVEQISEFCRGEVKEYIDWFGGPEGPRLAMIRCEETVLSNWVEYINKTSSEITTYQDNRFFREDFKDIAVHLKNMTTFIDCYNDYMIHCRKYNNNKPNTKFLEEKQTFKEYIEKFIPKVASCNDVSLNQFYDRSLIQSSDGIVTINTSGIKKTLINQSNIISITSTTTTTTTTTTTTCSMPNMSNLIHSLDHTNLNIIDLNHSKSQQQLHPPPSPHHQHLHHQIVSNSKDFNISVSSNNFNDGNSEFPNLDINCDFDLTSASNLSSPILSSEVPSNVVDPIGSGQGGGGSGGGGVTAVTEEAINEKWHFDCNTSMIFKPPSEDGRNEGSNMSTSSITSKMSLSLNGGFDMKWVYQCGYFKSKNMGSISWNGKHWCWSHPRTSYKIKYIWDPTKQSFLNIPFKSRVGATGGGSVPSSQSTNNLQSSTSSMSSLSSSSTSTTKRSHPTTLYPDYQFKDNLLTPIIIEGRHQPSLTLIDSPLTIPNACLLTIAMTQYIQDALIHLSLGPKVLSSK</sequence>
<reference key="1">
    <citation type="journal article" date="1994" name="J. Cell Biol.">
        <title>CRAC, a cytosolic protein containing a pleckstrin homology domain, is required for receptor and G protein-mediated activation of adenylyl cyclase in Dictyostelium.</title>
        <authorList>
            <person name="Insall R."/>
            <person name="Kupsa A."/>
            <person name="Lilly P.J."/>
            <person name="Shaulsky G."/>
            <person name="Levin L.R."/>
            <person name="Loomis W.F."/>
            <person name="Devreotes P.N."/>
        </authorList>
    </citation>
    <scope>NUCLEOTIDE SEQUENCE [GENOMIC DNA]</scope>
    <source>
        <strain>AX4</strain>
    </source>
</reference>
<reference key="2">
    <citation type="journal article" date="2005" name="Nature">
        <title>The genome of the social amoeba Dictyostelium discoideum.</title>
        <authorList>
            <person name="Eichinger L."/>
            <person name="Pachebat J.A."/>
            <person name="Gloeckner G."/>
            <person name="Rajandream M.A."/>
            <person name="Sucgang R."/>
            <person name="Berriman M."/>
            <person name="Song J."/>
            <person name="Olsen R."/>
            <person name="Szafranski K."/>
            <person name="Xu Q."/>
            <person name="Tunggal B."/>
            <person name="Kummerfeld S."/>
            <person name="Madera M."/>
            <person name="Konfortov B.A."/>
            <person name="Rivero F."/>
            <person name="Bankier A.T."/>
            <person name="Lehmann R."/>
            <person name="Hamlin N."/>
            <person name="Davies R."/>
            <person name="Gaudet P."/>
            <person name="Fey P."/>
            <person name="Pilcher K."/>
            <person name="Chen G."/>
            <person name="Saunders D."/>
            <person name="Sodergren E.J."/>
            <person name="Davis P."/>
            <person name="Kerhornou A."/>
            <person name="Nie X."/>
            <person name="Hall N."/>
            <person name="Anjard C."/>
            <person name="Hemphill L."/>
            <person name="Bason N."/>
            <person name="Farbrother P."/>
            <person name="Desany B."/>
            <person name="Just E."/>
            <person name="Morio T."/>
            <person name="Rost R."/>
            <person name="Churcher C.M."/>
            <person name="Cooper J."/>
            <person name="Haydock S."/>
            <person name="van Driessche N."/>
            <person name="Cronin A."/>
            <person name="Goodhead I."/>
            <person name="Muzny D.M."/>
            <person name="Mourier T."/>
            <person name="Pain A."/>
            <person name="Lu M."/>
            <person name="Harper D."/>
            <person name="Lindsay R."/>
            <person name="Hauser H."/>
            <person name="James K.D."/>
            <person name="Quiles M."/>
            <person name="Madan Babu M."/>
            <person name="Saito T."/>
            <person name="Buchrieser C."/>
            <person name="Wardroper A."/>
            <person name="Felder M."/>
            <person name="Thangavelu M."/>
            <person name="Johnson D."/>
            <person name="Knights A."/>
            <person name="Loulseged H."/>
            <person name="Mungall K.L."/>
            <person name="Oliver K."/>
            <person name="Price C."/>
            <person name="Quail M.A."/>
            <person name="Urushihara H."/>
            <person name="Hernandez J."/>
            <person name="Rabbinowitsch E."/>
            <person name="Steffen D."/>
            <person name="Sanders M."/>
            <person name="Ma J."/>
            <person name="Kohara Y."/>
            <person name="Sharp S."/>
            <person name="Simmonds M.N."/>
            <person name="Spiegler S."/>
            <person name="Tivey A."/>
            <person name="Sugano S."/>
            <person name="White B."/>
            <person name="Walker D."/>
            <person name="Woodward J.R."/>
            <person name="Winckler T."/>
            <person name="Tanaka Y."/>
            <person name="Shaulsky G."/>
            <person name="Schleicher M."/>
            <person name="Weinstock G.M."/>
            <person name="Rosenthal A."/>
            <person name="Cox E.C."/>
            <person name="Chisholm R.L."/>
            <person name="Gibbs R.A."/>
            <person name="Loomis W.F."/>
            <person name="Platzer M."/>
            <person name="Kay R.R."/>
            <person name="Williams J.G."/>
            <person name="Dear P.H."/>
            <person name="Noegel A.A."/>
            <person name="Barrell B.G."/>
            <person name="Kuspa A."/>
        </authorList>
    </citation>
    <scope>NUCLEOTIDE SEQUENCE [LARGE SCALE GENOMIC DNA]</scope>
    <source>
        <strain>AX4</strain>
    </source>
</reference>
<reference key="3">
    <citation type="journal article" date="1994" name="J. Biol. Chem.">
        <title>Identification of CRAC, a cytosolic regulator required for guanine nucleotide stimulation of adenylyl cyclase in Dictyostelium.</title>
        <authorList>
            <person name="Lilly P.J."/>
            <person name="Devreotes P.N."/>
        </authorList>
    </citation>
    <scope>PROTEIN SEQUENCE OF 2-9</scope>
</reference>
<reference key="4">
    <citation type="journal article" date="1997" name="Genes Dev.">
        <title>A novel cytosolic regulator, Pianissimo, is required for chemoattractant receptor and G protein-mediated activation of the 12 transmembrane domain adenylyl cyclase in Dictyostelium.</title>
        <authorList>
            <person name="Chen M.-Y."/>
            <person name="Long Y."/>
            <person name="Devreotes P.N."/>
        </authorList>
    </citation>
    <scope>FUNCTION</scope>
    <scope>DISRUPTION PHENOTYPE</scope>
</reference>
<dbReference type="EMBL" id="U06228">
    <property type="protein sequence ID" value="AAA61782.1"/>
    <property type="molecule type" value="Genomic_DNA"/>
</dbReference>
<dbReference type="EMBL" id="AAFI02000075">
    <property type="protein sequence ID" value="EAL64837.1"/>
    <property type="molecule type" value="Genomic_DNA"/>
</dbReference>
<dbReference type="PIR" id="A54796">
    <property type="entry name" value="A54796"/>
</dbReference>
<dbReference type="RefSeq" id="XP_638365.1">
    <property type="nucleotide sequence ID" value="XM_633273.1"/>
</dbReference>
<dbReference type="SMR" id="P35401"/>
<dbReference type="FunCoup" id="P35401">
    <property type="interactions" value="448"/>
</dbReference>
<dbReference type="STRING" id="44689.P35401"/>
<dbReference type="PaxDb" id="44689-DDB0191434"/>
<dbReference type="EnsemblProtists" id="EAL64837">
    <property type="protein sequence ID" value="EAL64837"/>
    <property type="gene ID" value="DDB_G0285161"/>
</dbReference>
<dbReference type="GeneID" id="8624989"/>
<dbReference type="KEGG" id="ddi:DDB_G0285161"/>
<dbReference type="dictyBase" id="DDB_G0285161">
    <property type="gene designation" value="dagA"/>
</dbReference>
<dbReference type="VEuPathDB" id="AmoebaDB:DDB_G0285161"/>
<dbReference type="eggNOG" id="ENOG502R7J7">
    <property type="taxonomic scope" value="Eukaryota"/>
</dbReference>
<dbReference type="HOGENOM" id="CLU_395077_0_0_1"/>
<dbReference type="InParanoid" id="P35401"/>
<dbReference type="OMA" id="LAMIRCE"/>
<dbReference type="PRO" id="PR:P35401"/>
<dbReference type="Proteomes" id="UP000002195">
    <property type="component" value="Chromosome 4"/>
</dbReference>
<dbReference type="GO" id="GO:0031252">
    <property type="term" value="C:cell leading edge"/>
    <property type="evidence" value="ECO:0000314"/>
    <property type="project" value="dictyBase"/>
</dbReference>
<dbReference type="GO" id="GO:0009898">
    <property type="term" value="C:cytoplasmic side of plasma membrane"/>
    <property type="evidence" value="ECO:0000314"/>
    <property type="project" value="dictyBase"/>
</dbReference>
<dbReference type="GO" id="GO:0005829">
    <property type="term" value="C:cytosol"/>
    <property type="evidence" value="ECO:0000314"/>
    <property type="project" value="dictyBase"/>
</dbReference>
<dbReference type="GO" id="GO:0031256">
    <property type="term" value="C:leading edge membrane"/>
    <property type="evidence" value="ECO:0000314"/>
    <property type="project" value="dictyBase"/>
</dbReference>
<dbReference type="GO" id="GO:0070685">
    <property type="term" value="C:macropinocytic cup"/>
    <property type="evidence" value="ECO:0000314"/>
    <property type="project" value="dictyBase"/>
</dbReference>
<dbReference type="GO" id="GO:0016020">
    <property type="term" value="C:membrane"/>
    <property type="evidence" value="ECO:0000314"/>
    <property type="project" value="dictyBase"/>
</dbReference>
<dbReference type="GO" id="GO:0001891">
    <property type="term" value="C:phagocytic cup"/>
    <property type="evidence" value="ECO:0000314"/>
    <property type="project" value="dictyBase"/>
</dbReference>
<dbReference type="GO" id="GO:0005886">
    <property type="term" value="C:plasma membrane"/>
    <property type="evidence" value="ECO:0000314"/>
    <property type="project" value="dictyBase"/>
</dbReference>
<dbReference type="GO" id="GO:0031143">
    <property type="term" value="C:pseudopodium"/>
    <property type="evidence" value="ECO:0000314"/>
    <property type="project" value="dictyBase"/>
</dbReference>
<dbReference type="GO" id="GO:0008047">
    <property type="term" value="F:enzyme activator activity"/>
    <property type="evidence" value="ECO:0000315"/>
    <property type="project" value="dictyBase"/>
</dbReference>
<dbReference type="GO" id="GO:0005547">
    <property type="term" value="F:phosphatidylinositol-3,4,5-trisphosphate binding"/>
    <property type="evidence" value="ECO:0000314"/>
    <property type="project" value="dictyBase"/>
</dbReference>
<dbReference type="GO" id="GO:0043325">
    <property type="term" value="F:phosphatidylinositol-3,4-bisphosphate binding"/>
    <property type="evidence" value="ECO:0000315"/>
    <property type="project" value="dictyBase"/>
</dbReference>
<dbReference type="GO" id="GO:0005543">
    <property type="term" value="F:phospholipid binding"/>
    <property type="evidence" value="ECO:0000318"/>
    <property type="project" value="GO_Central"/>
</dbReference>
<dbReference type="GO" id="GO:0019887">
    <property type="term" value="F:protein kinase regulator activity"/>
    <property type="evidence" value="ECO:0000315"/>
    <property type="project" value="dictyBase"/>
</dbReference>
<dbReference type="GO" id="GO:0007188">
    <property type="term" value="P:adenylate cyclase-modulating G protein-coupled receptor signaling pathway"/>
    <property type="evidence" value="ECO:0000314"/>
    <property type="project" value="dictyBase"/>
</dbReference>
<dbReference type="GO" id="GO:0031152">
    <property type="term" value="P:aggregation involved in sorocarp development"/>
    <property type="evidence" value="ECO:0000315"/>
    <property type="project" value="dictyBase"/>
</dbReference>
<dbReference type="GO" id="GO:0006935">
    <property type="term" value="P:chemotaxis"/>
    <property type="evidence" value="ECO:0000315"/>
    <property type="project" value="dictyBase"/>
</dbReference>
<dbReference type="GO" id="GO:0000165">
    <property type="term" value="P:MAPK cascade"/>
    <property type="evidence" value="ECO:0000315"/>
    <property type="project" value="dictyBase"/>
</dbReference>
<dbReference type="GO" id="GO:0048015">
    <property type="term" value="P:phosphatidylinositol-mediated signaling"/>
    <property type="evidence" value="ECO:0000304"/>
    <property type="project" value="dictyBase"/>
</dbReference>
<dbReference type="GO" id="GO:0008064">
    <property type="term" value="P:regulation of actin polymerization or depolymerization"/>
    <property type="evidence" value="ECO:0000315"/>
    <property type="project" value="dictyBase"/>
</dbReference>
<dbReference type="GO" id="GO:0106070">
    <property type="term" value="P:regulation of adenylate cyclase-activating G protein-coupled receptor signaling pathway"/>
    <property type="evidence" value="ECO:0000315"/>
    <property type="project" value="dictyBase"/>
</dbReference>
<dbReference type="GO" id="GO:0030587">
    <property type="term" value="P:sorocarp development"/>
    <property type="evidence" value="ECO:0007001"/>
    <property type="project" value="dictyBase"/>
</dbReference>
<dbReference type="GO" id="GO:0030435">
    <property type="term" value="P:sporulation resulting in formation of a cellular spore"/>
    <property type="evidence" value="ECO:0000304"/>
    <property type="project" value="dictyBase"/>
</dbReference>
<dbReference type="Gene3D" id="2.30.29.30">
    <property type="entry name" value="Pleckstrin-homology domain (PH domain)/Phosphotyrosine-binding domain (PTB)"/>
    <property type="match status" value="1"/>
</dbReference>
<dbReference type="InterPro" id="IPR011993">
    <property type="entry name" value="PH-like_dom_sf"/>
</dbReference>
<dbReference type="InterPro" id="IPR001849">
    <property type="entry name" value="PH_domain"/>
</dbReference>
<dbReference type="InterPro" id="IPR051707">
    <property type="entry name" value="PI-Interact_SigTrans_Reg"/>
</dbReference>
<dbReference type="PANTHER" id="PTHR14336:SF19">
    <property type="entry name" value="PROTEIN CRAC"/>
    <property type="match status" value="1"/>
</dbReference>
<dbReference type="PANTHER" id="PTHR14336">
    <property type="entry name" value="TANDEM PH DOMAIN CONTAINING PROTEIN"/>
    <property type="match status" value="1"/>
</dbReference>
<dbReference type="Pfam" id="PF00169">
    <property type="entry name" value="PH"/>
    <property type="match status" value="1"/>
</dbReference>
<dbReference type="SMART" id="SM00233">
    <property type="entry name" value="PH"/>
    <property type="match status" value="1"/>
</dbReference>
<dbReference type="SUPFAM" id="SSF50729">
    <property type="entry name" value="PH domain-like"/>
    <property type="match status" value="1"/>
</dbReference>
<dbReference type="PROSITE" id="PS50003">
    <property type="entry name" value="PH_DOMAIN"/>
    <property type="match status" value="1"/>
</dbReference>
<comment type="function">
    <text evidence="4">Couples activated G protein to adenylyl cyclase signal transduction from surface cAMP receptor. Pianissimo a cytosolic regulator and CRAC, are both essential for activation of the enzyme adenylyl cyclase. Pianissimo and CRAC do not function redundantly. Both proteins are integral components of the adenylyl cyclase activation pathway.</text>
</comment>
<comment type="subcellular location">
    <subcellularLocation>
        <location>Cytoplasm</location>
    </subcellularLocation>
</comment>
<comment type="developmental stage">
    <text>Tightly developmentally regulated.</text>
</comment>
<comment type="disruption phenotype">
    <text evidence="4">dagA and piaA double mutants require both proteins for reconstitution and activation of adenylyl cyclase.</text>
</comment>